<proteinExistence type="inferred from homology"/>
<evidence type="ECO:0000255" key="1">
    <source>
        <dbReference type="HAMAP-Rule" id="MF_00054"/>
    </source>
</evidence>
<feature type="chain" id="PRO_0000335858" description="Elongation factor G">
    <location>
        <begin position="1"/>
        <end position="695"/>
    </location>
</feature>
<feature type="domain" description="tr-type G">
    <location>
        <begin position="12"/>
        <end position="286"/>
    </location>
</feature>
<feature type="binding site" evidence="1">
    <location>
        <begin position="21"/>
        <end position="28"/>
    </location>
    <ligand>
        <name>GTP</name>
        <dbReference type="ChEBI" id="CHEBI:37565"/>
    </ligand>
</feature>
<feature type="binding site" evidence="1">
    <location>
        <begin position="85"/>
        <end position="89"/>
    </location>
    <ligand>
        <name>GTP</name>
        <dbReference type="ChEBI" id="CHEBI:37565"/>
    </ligand>
</feature>
<feature type="binding site" evidence="1">
    <location>
        <begin position="139"/>
        <end position="142"/>
    </location>
    <ligand>
        <name>GTP</name>
        <dbReference type="ChEBI" id="CHEBI:37565"/>
    </ligand>
</feature>
<name>EFG_THEP1</name>
<dbReference type="EMBL" id="CP000702">
    <property type="protein sequence ID" value="ABQ47303.1"/>
    <property type="molecule type" value="Genomic_DNA"/>
</dbReference>
<dbReference type="RefSeq" id="WP_011943783.1">
    <property type="nucleotide sequence ID" value="NC_009486.1"/>
</dbReference>
<dbReference type="SMR" id="A5IM80"/>
<dbReference type="STRING" id="390874.Tpet_1289"/>
<dbReference type="KEGG" id="tpt:Tpet_1289"/>
<dbReference type="eggNOG" id="COG0480">
    <property type="taxonomic scope" value="Bacteria"/>
</dbReference>
<dbReference type="HOGENOM" id="CLU_002794_4_1_0"/>
<dbReference type="Proteomes" id="UP000006558">
    <property type="component" value="Chromosome"/>
</dbReference>
<dbReference type="GO" id="GO:0005737">
    <property type="term" value="C:cytoplasm"/>
    <property type="evidence" value="ECO:0007669"/>
    <property type="project" value="UniProtKB-SubCell"/>
</dbReference>
<dbReference type="GO" id="GO:0005525">
    <property type="term" value="F:GTP binding"/>
    <property type="evidence" value="ECO:0007669"/>
    <property type="project" value="UniProtKB-UniRule"/>
</dbReference>
<dbReference type="GO" id="GO:0003924">
    <property type="term" value="F:GTPase activity"/>
    <property type="evidence" value="ECO:0007669"/>
    <property type="project" value="InterPro"/>
</dbReference>
<dbReference type="GO" id="GO:0003746">
    <property type="term" value="F:translation elongation factor activity"/>
    <property type="evidence" value="ECO:0007669"/>
    <property type="project" value="UniProtKB-UniRule"/>
</dbReference>
<dbReference type="GO" id="GO:0032790">
    <property type="term" value="P:ribosome disassembly"/>
    <property type="evidence" value="ECO:0007669"/>
    <property type="project" value="TreeGrafter"/>
</dbReference>
<dbReference type="CDD" id="cd01886">
    <property type="entry name" value="EF-G"/>
    <property type="match status" value="1"/>
</dbReference>
<dbReference type="CDD" id="cd16262">
    <property type="entry name" value="EFG_III"/>
    <property type="match status" value="1"/>
</dbReference>
<dbReference type="CDD" id="cd01434">
    <property type="entry name" value="EFG_mtEFG1_IV"/>
    <property type="match status" value="1"/>
</dbReference>
<dbReference type="CDD" id="cd03713">
    <property type="entry name" value="EFG_mtEFG_C"/>
    <property type="match status" value="1"/>
</dbReference>
<dbReference type="CDD" id="cd04088">
    <property type="entry name" value="EFG_mtEFG_II"/>
    <property type="match status" value="1"/>
</dbReference>
<dbReference type="FunFam" id="2.40.30.10:FF:000006">
    <property type="entry name" value="Elongation factor G"/>
    <property type="match status" value="1"/>
</dbReference>
<dbReference type="FunFam" id="3.30.230.10:FF:000003">
    <property type="entry name" value="Elongation factor G"/>
    <property type="match status" value="1"/>
</dbReference>
<dbReference type="FunFam" id="3.30.70.240:FF:000001">
    <property type="entry name" value="Elongation factor G"/>
    <property type="match status" value="1"/>
</dbReference>
<dbReference type="FunFam" id="3.30.70.870:FF:000001">
    <property type="entry name" value="Elongation factor G"/>
    <property type="match status" value="1"/>
</dbReference>
<dbReference type="FunFam" id="3.40.50.300:FF:000029">
    <property type="entry name" value="Elongation factor G"/>
    <property type="match status" value="1"/>
</dbReference>
<dbReference type="Gene3D" id="3.30.230.10">
    <property type="match status" value="1"/>
</dbReference>
<dbReference type="Gene3D" id="3.30.70.240">
    <property type="match status" value="1"/>
</dbReference>
<dbReference type="Gene3D" id="3.30.70.870">
    <property type="entry name" value="Elongation Factor G (Translational Gtpase), domain 3"/>
    <property type="match status" value="1"/>
</dbReference>
<dbReference type="Gene3D" id="3.40.50.300">
    <property type="entry name" value="P-loop containing nucleotide triphosphate hydrolases"/>
    <property type="match status" value="1"/>
</dbReference>
<dbReference type="Gene3D" id="2.40.30.10">
    <property type="entry name" value="Translation factors"/>
    <property type="match status" value="1"/>
</dbReference>
<dbReference type="HAMAP" id="MF_00054_B">
    <property type="entry name" value="EF_G_EF_2_B"/>
    <property type="match status" value="1"/>
</dbReference>
<dbReference type="InterPro" id="IPR053905">
    <property type="entry name" value="EF-G-like_DII"/>
</dbReference>
<dbReference type="InterPro" id="IPR041095">
    <property type="entry name" value="EFG_II"/>
</dbReference>
<dbReference type="InterPro" id="IPR009022">
    <property type="entry name" value="EFG_III"/>
</dbReference>
<dbReference type="InterPro" id="IPR035647">
    <property type="entry name" value="EFG_III/V"/>
</dbReference>
<dbReference type="InterPro" id="IPR047872">
    <property type="entry name" value="EFG_IV"/>
</dbReference>
<dbReference type="InterPro" id="IPR035649">
    <property type="entry name" value="EFG_V"/>
</dbReference>
<dbReference type="InterPro" id="IPR000640">
    <property type="entry name" value="EFG_V-like"/>
</dbReference>
<dbReference type="InterPro" id="IPR031157">
    <property type="entry name" value="G_TR_CS"/>
</dbReference>
<dbReference type="InterPro" id="IPR027417">
    <property type="entry name" value="P-loop_NTPase"/>
</dbReference>
<dbReference type="InterPro" id="IPR020568">
    <property type="entry name" value="Ribosomal_Su5_D2-typ_SF"/>
</dbReference>
<dbReference type="InterPro" id="IPR014721">
    <property type="entry name" value="Ribsml_uS5_D2-typ_fold_subgr"/>
</dbReference>
<dbReference type="InterPro" id="IPR005225">
    <property type="entry name" value="Small_GTP-bd"/>
</dbReference>
<dbReference type="InterPro" id="IPR000795">
    <property type="entry name" value="T_Tr_GTP-bd_dom"/>
</dbReference>
<dbReference type="InterPro" id="IPR009000">
    <property type="entry name" value="Transl_B-barrel_sf"/>
</dbReference>
<dbReference type="InterPro" id="IPR004540">
    <property type="entry name" value="Transl_elong_EFG/EF2"/>
</dbReference>
<dbReference type="InterPro" id="IPR005517">
    <property type="entry name" value="Transl_elong_EFG/EF2_IV"/>
</dbReference>
<dbReference type="NCBIfam" id="TIGR00484">
    <property type="entry name" value="EF-G"/>
    <property type="match status" value="1"/>
</dbReference>
<dbReference type="NCBIfam" id="NF009379">
    <property type="entry name" value="PRK12740.1-3"/>
    <property type="match status" value="1"/>
</dbReference>
<dbReference type="NCBIfam" id="NF009381">
    <property type="entry name" value="PRK12740.1-5"/>
    <property type="match status" value="1"/>
</dbReference>
<dbReference type="NCBIfam" id="NF009891">
    <property type="entry name" value="PRK13351.1-1"/>
    <property type="match status" value="1"/>
</dbReference>
<dbReference type="NCBIfam" id="TIGR00231">
    <property type="entry name" value="small_GTP"/>
    <property type="match status" value="1"/>
</dbReference>
<dbReference type="PANTHER" id="PTHR43261:SF1">
    <property type="entry name" value="RIBOSOME-RELEASING FACTOR 2, MITOCHONDRIAL"/>
    <property type="match status" value="1"/>
</dbReference>
<dbReference type="PANTHER" id="PTHR43261">
    <property type="entry name" value="TRANSLATION ELONGATION FACTOR G-RELATED"/>
    <property type="match status" value="1"/>
</dbReference>
<dbReference type="Pfam" id="PF22042">
    <property type="entry name" value="EF-G_D2"/>
    <property type="match status" value="1"/>
</dbReference>
<dbReference type="Pfam" id="PF00679">
    <property type="entry name" value="EFG_C"/>
    <property type="match status" value="1"/>
</dbReference>
<dbReference type="Pfam" id="PF14492">
    <property type="entry name" value="EFG_III"/>
    <property type="match status" value="1"/>
</dbReference>
<dbReference type="Pfam" id="PF03764">
    <property type="entry name" value="EFG_IV"/>
    <property type="match status" value="1"/>
</dbReference>
<dbReference type="Pfam" id="PF00009">
    <property type="entry name" value="GTP_EFTU"/>
    <property type="match status" value="1"/>
</dbReference>
<dbReference type="PRINTS" id="PR00315">
    <property type="entry name" value="ELONGATNFCT"/>
</dbReference>
<dbReference type="SMART" id="SM00838">
    <property type="entry name" value="EFG_C"/>
    <property type="match status" value="1"/>
</dbReference>
<dbReference type="SMART" id="SM00889">
    <property type="entry name" value="EFG_IV"/>
    <property type="match status" value="1"/>
</dbReference>
<dbReference type="SUPFAM" id="SSF54980">
    <property type="entry name" value="EF-G C-terminal domain-like"/>
    <property type="match status" value="2"/>
</dbReference>
<dbReference type="SUPFAM" id="SSF52540">
    <property type="entry name" value="P-loop containing nucleoside triphosphate hydrolases"/>
    <property type="match status" value="1"/>
</dbReference>
<dbReference type="SUPFAM" id="SSF54211">
    <property type="entry name" value="Ribosomal protein S5 domain 2-like"/>
    <property type="match status" value="1"/>
</dbReference>
<dbReference type="SUPFAM" id="SSF50447">
    <property type="entry name" value="Translation proteins"/>
    <property type="match status" value="1"/>
</dbReference>
<dbReference type="PROSITE" id="PS00301">
    <property type="entry name" value="G_TR_1"/>
    <property type="match status" value="1"/>
</dbReference>
<dbReference type="PROSITE" id="PS51722">
    <property type="entry name" value="G_TR_2"/>
    <property type="match status" value="1"/>
</dbReference>
<comment type="function">
    <text evidence="1">Catalyzes the GTP-dependent ribosomal translocation step during translation elongation. During this step, the ribosome changes from the pre-translocational (PRE) to the post-translocational (POST) state as the newly formed A-site-bound peptidyl-tRNA and P-site-bound deacylated tRNA move to the P and E sites, respectively. Catalyzes the coordinated movement of the two tRNA molecules, the mRNA and conformational changes in the ribosome.</text>
</comment>
<comment type="subcellular location">
    <subcellularLocation>
        <location evidence="1">Cytoplasm</location>
    </subcellularLocation>
</comment>
<comment type="similarity">
    <text evidence="1">Belongs to the TRAFAC class translation factor GTPase superfamily. Classic translation factor GTPase family. EF-G/EF-2 subfamily.</text>
</comment>
<protein>
    <recommendedName>
        <fullName evidence="1">Elongation factor G</fullName>
        <shortName evidence="1">EF-G</shortName>
    </recommendedName>
</protein>
<accession>A5IM80</accession>
<organism>
    <name type="scientific">Thermotoga petrophila (strain ATCC BAA-488 / DSM 13995 / JCM 10881 / RKU-1)</name>
    <dbReference type="NCBI Taxonomy" id="390874"/>
    <lineage>
        <taxon>Bacteria</taxon>
        <taxon>Thermotogati</taxon>
        <taxon>Thermotogota</taxon>
        <taxon>Thermotogae</taxon>
        <taxon>Thermotogales</taxon>
        <taxon>Thermotogaceae</taxon>
        <taxon>Thermotoga</taxon>
    </lineage>
</organism>
<gene>
    <name evidence="1" type="primary">fusA</name>
    <name type="ordered locus">Tpet_1289</name>
</gene>
<sequence length="695" mass="78257">MENVEARYVDLDKLRNIGIMAHIDAGKTTTTERILYYTGRKHFLGDVDEGNTTTDWMPQEKERGITIQSAATTCFWKGYRINIIDTPGHVDFTAEVERALRVLDGAIAVFDATAGVEPQSETVWRQADKYNVPRIAFMNKMDKVGADFYMAVETLVTKLKANPIPVQMPIGSEKDFQGVIDLIKMKAIYWVSEDGSVYEEREIPEELREEAEMRREEMLEKVAELDEEILEKYLEGEEISEEEIKRILRKATIENRAVPVLCGAAKANKGIQPLLDAVIDYLPSPLDLPPVKGWRVSDGEIVYRKPDENEPFTALVFKVQVDPYIGKLVYFRVYSGRLEKGSYVYNSTKGQRERISRIVFMHADKREEVDYVRPGDIAAGVGLKVSQTGDTLCDEKEPVILEKIDFPEPVISLAIEPATKADEEKLVKALLALSEEDPTLQVRVDKETGETIISGMGELHLEIVVDRLKREFGVNVRVGQPQVAYRETIKRPAEAEGKYIRQTGGRGQYGHVILRIEPIPEEEGKNFEFIDKTVGGVIPKEFMPAIEAGIKEAMMSGPLAGYPVVRVRAVVLDGSYHEVDSSEMAFKIAASMAFKEAMKKAQPVLLEPIMKLEITTPEEYMGNIISDLNSRRAKIESLETRGHLKIVVAKIPLSETFGYATVLRSLSQGRASYIMQFSHYQEVPEKIAEKIIKVV</sequence>
<keyword id="KW-0963">Cytoplasm</keyword>
<keyword id="KW-0251">Elongation factor</keyword>
<keyword id="KW-0342">GTP-binding</keyword>
<keyword id="KW-0547">Nucleotide-binding</keyword>
<keyword id="KW-0648">Protein biosynthesis</keyword>
<reference key="1">
    <citation type="submission" date="2007-05" db="EMBL/GenBank/DDBJ databases">
        <title>Complete sequence of Thermotoga petrophila RKU-1.</title>
        <authorList>
            <consortium name="US DOE Joint Genome Institute"/>
            <person name="Copeland A."/>
            <person name="Lucas S."/>
            <person name="Lapidus A."/>
            <person name="Barry K."/>
            <person name="Glavina del Rio T."/>
            <person name="Dalin E."/>
            <person name="Tice H."/>
            <person name="Pitluck S."/>
            <person name="Sims D."/>
            <person name="Brettin T."/>
            <person name="Bruce D."/>
            <person name="Detter J.C."/>
            <person name="Han C."/>
            <person name="Tapia R."/>
            <person name="Schmutz J."/>
            <person name="Larimer F."/>
            <person name="Land M."/>
            <person name="Hauser L."/>
            <person name="Kyrpides N."/>
            <person name="Mikhailova N."/>
            <person name="Nelson K."/>
            <person name="Gogarten J.P."/>
            <person name="Noll K."/>
            <person name="Richardson P."/>
        </authorList>
    </citation>
    <scope>NUCLEOTIDE SEQUENCE [LARGE SCALE GENOMIC DNA]</scope>
    <source>
        <strain>ATCC BAA-488 / DSM 13995 / JCM 10881 / RKU-1</strain>
    </source>
</reference>